<name>CHED_METM5</name>
<organism>
    <name type="scientific">Methanococcus maripaludis (strain C5 / ATCC BAA-1333)</name>
    <dbReference type="NCBI Taxonomy" id="402880"/>
    <lineage>
        <taxon>Archaea</taxon>
        <taxon>Methanobacteriati</taxon>
        <taxon>Methanobacteriota</taxon>
        <taxon>Methanomada group</taxon>
        <taxon>Methanococci</taxon>
        <taxon>Methanococcales</taxon>
        <taxon>Methanococcaceae</taxon>
        <taxon>Methanococcus</taxon>
    </lineage>
</organism>
<accession>A4FXW1</accession>
<feature type="chain" id="PRO_1000068553" description="Probable chemoreceptor glutamine deamidase CheD">
    <location>
        <begin position="1"/>
        <end position="154"/>
    </location>
</feature>
<dbReference type="EC" id="3.5.1.44" evidence="1"/>
<dbReference type="EMBL" id="CP000609">
    <property type="protein sequence ID" value="ABO35045.1"/>
    <property type="molecule type" value="Genomic_DNA"/>
</dbReference>
<dbReference type="RefSeq" id="WP_011868499.1">
    <property type="nucleotide sequence ID" value="NC_009135.1"/>
</dbReference>
<dbReference type="SMR" id="A4FXW1"/>
<dbReference type="STRING" id="402880.MmarC5_0735"/>
<dbReference type="GeneID" id="4928679"/>
<dbReference type="KEGG" id="mmq:MmarC5_0735"/>
<dbReference type="eggNOG" id="arCOG02380">
    <property type="taxonomic scope" value="Archaea"/>
</dbReference>
<dbReference type="HOGENOM" id="CLU_087854_2_0_2"/>
<dbReference type="OrthoDB" id="10499at2157"/>
<dbReference type="Proteomes" id="UP000000253">
    <property type="component" value="Chromosome"/>
</dbReference>
<dbReference type="GO" id="GO:0050568">
    <property type="term" value="F:protein-glutamine glutaminase activity"/>
    <property type="evidence" value="ECO:0007669"/>
    <property type="project" value="UniProtKB-UniRule"/>
</dbReference>
<dbReference type="GO" id="GO:0006935">
    <property type="term" value="P:chemotaxis"/>
    <property type="evidence" value="ECO:0007669"/>
    <property type="project" value="UniProtKB-UniRule"/>
</dbReference>
<dbReference type="CDD" id="cd16352">
    <property type="entry name" value="CheD"/>
    <property type="match status" value="1"/>
</dbReference>
<dbReference type="Gene3D" id="3.30.1330.200">
    <property type="match status" value="1"/>
</dbReference>
<dbReference type="HAMAP" id="MF_01440">
    <property type="entry name" value="CheD"/>
    <property type="match status" value="1"/>
</dbReference>
<dbReference type="InterPro" id="IPR038592">
    <property type="entry name" value="CheD-like_sf"/>
</dbReference>
<dbReference type="InterPro" id="IPR005659">
    <property type="entry name" value="Chemorcpt_Glu_NH3ase_CheD"/>
</dbReference>
<dbReference type="InterPro" id="IPR011324">
    <property type="entry name" value="Cytotoxic_necrot_fac-like_cat"/>
</dbReference>
<dbReference type="PANTHER" id="PTHR35147">
    <property type="entry name" value="CHEMORECEPTOR GLUTAMINE DEAMIDASE CHED-RELATED"/>
    <property type="match status" value="1"/>
</dbReference>
<dbReference type="PANTHER" id="PTHR35147:SF1">
    <property type="entry name" value="CHEMORECEPTOR GLUTAMINE DEAMIDASE CHED-RELATED"/>
    <property type="match status" value="1"/>
</dbReference>
<dbReference type="Pfam" id="PF03975">
    <property type="entry name" value="CheD"/>
    <property type="match status" value="1"/>
</dbReference>
<dbReference type="SUPFAM" id="SSF64438">
    <property type="entry name" value="CNF1/YfiH-like putative cysteine hydrolases"/>
    <property type="match status" value="1"/>
</dbReference>
<gene>
    <name evidence="1" type="primary">cheD</name>
    <name type="ordered locus">MmarC5_0735</name>
</gene>
<comment type="function">
    <text evidence="1">Probably deamidates glutamine residues to glutamate on methyl-accepting chemotaxis receptors (MCPs), playing an important role in chemotaxis.</text>
</comment>
<comment type="catalytic activity">
    <reaction evidence="1">
        <text>L-glutaminyl-[protein] + H2O = L-glutamyl-[protein] + NH4(+)</text>
        <dbReference type="Rhea" id="RHEA:16441"/>
        <dbReference type="Rhea" id="RHEA-COMP:10207"/>
        <dbReference type="Rhea" id="RHEA-COMP:10208"/>
        <dbReference type="ChEBI" id="CHEBI:15377"/>
        <dbReference type="ChEBI" id="CHEBI:28938"/>
        <dbReference type="ChEBI" id="CHEBI:29973"/>
        <dbReference type="ChEBI" id="CHEBI:30011"/>
        <dbReference type="EC" id="3.5.1.44"/>
    </reaction>
</comment>
<comment type="similarity">
    <text evidence="1">Belongs to the CheD family.</text>
</comment>
<evidence type="ECO:0000255" key="1">
    <source>
        <dbReference type="HAMAP-Rule" id="MF_01440"/>
    </source>
</evidence>
<sequence>MVLKVKMGDIGVGKSPESIETLLGSCVAIILYDKGKKIGGLAHVMLPKSRMQKEKNPGKYVDTAIPELITKIVKMGARKDRLTVKLAGGAAMFGNNSNNIDVGKKNIEASKIEIKKIGLRVSSEDLGGDTGRTITLSLKDGSVMVRKGSELKTI</sequence>
<reference key="1">
    <citation type="submission" date="2007-03" db="EMBL/GenBank/DDBJ databases">
        <title>Complete sequence of chromosome of Methanococcus maripaludis C5.</title>
        <authorList>
            <consortium name="US DOE Joint Genome Institute"/>
            <person name="Copeland A."/>
            <person name="Lucas S."/>
            <person name="Lapidus A."/>
            <person name="Barry K."/>
            <person name="Glavina del Rio T."/>
            <person name="Dalin E."/>
            <person name="Tice H."/>
            <person name="Pitluck S."/>
            <person name="Chertkov O."/>
            <person name="Brettin T."/>
            <person name="Bruce D."/>
            <person name="Han C."/>
            <person name="Detter J.C."/>
            <person name="Schmutz J."/>
            <person name="Larimer F."/>
            <person name="Land M."/>
            <person name="Hauser L."/>
            <person name="Kyrpides N."/>
            <person name="Mikhailova N."/>
            <person name="Sieprawska-Lupa M."/>
            <person name="Whitman W.B."/>
            <person name="Richardson P."/>
        </authorList>
    </citation>
    <scope>NUCLEOTIDE SEQUENCE [LARGE SCALE GENOMIC DNA]</scope>
    <source>
        <strain>C5 / ATCC BAA-1333</strain>
    </source>
</reference>
<keyword id="KW-0145">Chemotaxis</keyword>
<keyword id="KW-0378">Hydrolase</keyword>
<protein>
    <recommendedName>
        <fullName evidence="1">Probable chemoreceptor glutamine deamidase CheD</fullName>
        <ecNumber evidence="1">3.5.1.44</ecNumber>
    </recommendedName>
</protein>
<proteinExistence type="inferred from homology"/>